<gene>
    <name evidence="1" type="primary">thrS</name>
    <name type="ordered locus">Pcal_0635</name>
</gene>
<reference key="1">
    <citation type="submission" date="2007-02" db="EMBL/GenBank/DDBJ databases">
        <title>Complete sequence of Pyrobaculum calidifontis JCM 11548.</title>
        <authorList>
            <consortium name="US DOE Joint Genome Institute"/>
            <person name="Copeland A."/>
            <person name="Lucas S."/>
            <person name="Lapidus A."/>
            <person name="Barry K."/>
            <person name="Glavina del Rio T."/>
            <person name="Dalin E."/>
            <person name="Tice H."/>
            <person name="Pitluck S."/>
            <person name="Chain P."/>
            <person name="Malfatti S."/>
            <person name="Shin M."/>
            <person name="Vergez L."/>
            <person name="Schmutz J."/>
            <person name="Larimer F."/>
            <person name="Land M."/>
            <person name="Hauser L."/>
            <person name="Kyrpides N."/>
            <person name="Mikhailova N."/>
            <person name="Cozen A.E."/>
            <person name="Fitz-Gibbon S.T."/>
            <person name="House C.H."/>
            <person name="Saltikov C."/>
            <person name="Lowe T.M."/>
            <person name="Richardson P."/>
        </authorList>
    </citation>
    <scope>NUCLEOTIDE SEQUENCE [LARGE SCALE GENOMIC DNA]</scope>
    <source>
        <strain>DSM 21063 / JCM 11548 / VA1</strain>
    </source>
</reference>
<protein>
    <recommendedName>
        <fullName evidence="1">Threonine--tRNA ligase</fullName>
        <ecNumber evidence="1">6.1.1.3</ecNumber>
    </recommendedName>
    <alternativeName>
        <fullName evidence="1">Threonyl-tRNA synthetase</fullName>
        <shortName evidence="1">ThrRS</shortName>
    </alternativeName>
</protein>
<organism>
    <name type="scientific">Pyrobaculum calidifontis (strain DSM 21063 / JCM 11548 / VA1)</name>
    <dbReference type="NCBI Taxonomy" id="410359"/>
    <lineage>
        <taxon>Archaea</taxon>
        <taxon>Thermoproteota</taxon>
        <taxon>Thermoprotei</taxon>
        <taxon>Thermoproteales</taxon>
        <taxon>Thermoproteaceae</taxon>
        <taxon>Pyrobaculum</taxon>
    </lineage>
</organism>
<accession>A3MTU4</accession>
<name>SYT_PYRCJ</name>
<proteinExistence type="inferred from homology"/>
<evidence type="ECO:0000255" key="1">
    <source>
        <dbReference type="HAMAP-Rule" id="MF_00184"/>
    </source>
</evidence>
<dbReference type="EC" id="6.1.1.3" evidence="1"/>
<dbReference type="EMBL" id="CP000561">
    <property type="protein sequence ID" value="ABO08061.1"/>
    <property type="molecule type" value="Genomic_DNA"/>
</dbReference>
<dbReference type="RefSeq" id="WP_011849319.1">
    <property type="nucleotide sequence ID" value="NC_009073.1"/>
</dbReference>
<dbReference type="SMR" id="A3MTU4"/>
<dbReference type="STRING" id="410359.Pcal_0635"/>
<dbReference type="GeneID" id="4908427"/>
<dbReference type="KEGG" id="pcl:Pcal_0635"/>
<dbReference type="eggNOG" id="arCOG00401">
    <property type="taxonomic scope" value="Archaea"/>
</dbReference>
<dbReference type="HOGENOM" id="CLU_029833_0_0_2"/>
<dbReference type="OrthoDB" id="372136at2157"/>
<dbReference type="Proteomes" id="UP000001431">
    <property type="component" value="Chromosome"/>
</dbReference>
<dbReference type="GO" id="GO:0005737">
    <property type="term" value="C:cytoplasm"/>
    <property type="evidence" value="ECO:0007669"/>
    <property type="project" value="UniProtKB-SubCell"/>
</dbReference>
<dbReference type="GO" id="GO:0005524">
    <property type="term" value="F:ATP binding"/>
    <property type="evidence" value="ECO:0007669"/>
    <property type="project" value="UniProtKB-UniRule"/>
</dbReference>
<dbReference type="GO" id="GO:0004829">
    <property type="term" value="F:threonine-tRNA ligase activity"/>
    <property type="evidence" value="ECO:0007669"/>
    <property type="project" value="UniProtKB-UniRule"/>
</dbReference>
<dbReference type="GO" id="GO:0000049">
    <property type="term" value="F:tRNA binding"/>
    <property type="evidence" value="ECO:0007669"/>
    <property type="project" value="UniProtKB-KW"/>
</dbReference>
<dbReference type="GO" id="GO:0008270">
    <property type="term" value="F:zinc ion binding"/>
    <property type="evidence" value="ECO:0007669"/>
    <property type="project" value="InterPro"/>
</dbReference>
<dbReference type="GO" id="GO:0006435">
    <property type="term" value="P:threonyl-tRNA aminoacylation"/>
    <property type="evidence" value="ECO:0007669"/>
    <property type="project" value="UniProtKB-UniRule"/>
</dbReference>
<dbReference type="CDD" id="cd00860">
    <property type="entry name" value="ThrRS_anticodon"/>
    <property type="match status" value="1"/>
</dbReference>
<dbReference type="FunFam" id="3.30.930.10:FF:000076">
    <property type="entry name" value="Threonine--tRNA ligase"/>
    <property type="match status" value="1"/>
</dbReference>
<dbReference type="FunFam" id="3.40.50.800:FF:000001">
    <property type="entry name" value="Threonine--tRNA ligase"/>
    <property type="match status" value="1"/>
</dbReference>
<dbReference type="Gene3D" id="3.40.50.800">
    <property type="entry name" value="Anticodon-binding domain"/>
    <property type="match status" value="1"/>
</dbReference>
<dbReference type="Gene3D" id="3.30.930.10">
    <property type="entry name" value="Bira Bifunctional Protein, Domain 2"/>
    <property type="match status" value="1"/>
</dbReference>
<dbReference type="Gene3D" id="3.50.80.10">
    <property type="entry name" value="D-tyrosyl-tRNA(Tyr) deacylase"/>
    <property type="match status" value="1"/>
</dbReference>
<dbReference type="HAMAP" id="MF_00184">
    <property type="entry name" value="Thr_tRNA_synth"/>
    <property type="match status" value="1"/>
</dbReference>
<dbReference type="InterPro" id="IPR002314">
    <property type="entry name" value="aa-tRNA-synt_IIb"/>
</dbReference>
<dbReference type="InterPro" id="IPR006195">
    <property type="entry name" value="aa-tRNA-synth_II"/>
</dbReference>
<dbReference type="InterPro" id="IPR045864">
    <property type="entry name" value="aa-tRNA-synth_II/BPL/LPL"/>
</dbReference>
<dbReference type="InterPro" id="IPR004154">
    <property type="entry name" value="Anticodon-bd"/>
</dbReference>
<dbReference type="InterPro" id="IPR036621">
    <property type="entry name" value="Anticodon-bd_dom_sf"/>
</dbReference>
<dbReference type="InterPro" id="IPR023509">
    <property type="entry name" value="DTD-like_sf"/>
</dbReference>
<dbReference type="InterPro" id="IPR002320">
    <property type="entry name" value="Thr-tRNA-ligase_IIa"/>
</dbReference>
<dbReference type="InterPro" id="IPR015011">
    <property type="entry name" value="Threonyl-tRNA_syn_edit_dom_arc"/>
</dbReference>
<dbReference type="InterPro" id="IPR047246">
    <property type="entry name" value="ThrRS_anticodon"/>
</dbReference>
<dbReference type="NCBIfam" id="NF003068">
    <property type="entry name" value="PRK03991.1"/>
    <property type="match status" value="1"/>
</dbReference>
<dbReference type="PANTHER" id="PTHR11451:SF44">
    <property type="entry name" value="THREONINE--TRNA LIGASE, CHLOROPLASTIC_MITOCHONDRIAL 2"/>
    <property type="match status" value="1"/>
</dbReference>
<dbReference type="PANTHER" id="PTHR11451">
    <property type="entry name" value="THREONINE-TRNA LIGASE"/>
    <property type="match status" value="1"/>
</dbReference>
<dbReference type="Pfam" id="PF03129">
    <property type="entry name" value="HGTP_anticodon"/>
    <property type="match status" value="1"/>
</dbReference>
<dbReference type="Pfam" id="PF00587">
    <property type="entry name" value="tRNA-synt_2b"/>
    <property type="match status" value="1"/>
</dbReference>
<dbReference type="Pfam" id="PF08915">
    <property type="entry name" value="tRNA-Thr_ED"/>
    <property type="match status" value="1"/>
</dbReference>
<dbReference type="PRINTS" id="PR01047">
    <property type="entry name" value="TRNASYNTHTHR"/>
</dbReference>
<dbReference type="SUPFAM" id="SSF52954">
    <property type="entry name" value="Class II aaRS ABD-related"/>
    <property type="match status" value="1"/>
</dbReference>
<dbReference type="SUPFAM" id="SSF55681">
    <property type="entry name" value="Class II aaRS and biotin synthetases"/>
    <property type="match status" value="1"/>
</dbReference>
<dbReference type="PROSITE" id="PS50862">
    <property type="entry name" value="AA_TRNA_LIGASE_II"/>
    <property type="match status" value="1"/>
</dbReference>
<sequence length="607" mass="69993">MRVLYIHAERFSWESREPALDIRDEPGSGAAANALVVFVSVERGDSSDEEFLRRVARDVVETAEKVKATAVVIYPYAHLSNDLARPYVAKEVVNKLYEVVKSEFKGEVYKAPFGYYKAFEVKCLGHPLAELSRSFKPEEARVAKAVEERRDVYLVLTPDGREHDPAAYSPADPDLKALIDKEVFKRELGGGEPRYLDYLRKFGFEWEPMSDVGHMRYGPEATVMMELVEDYAYQVAKSLGIPVFKIRGTNMFKLSEKAIETHARLFGERLYIVESDTDLILRYAACFQQFAMAKDWVISYRNLPFGMLEIADSYRHEQPGETVVLFRLRRFYMPDLHIFTKDLAEAVEVSYKVHEAIFREIGKLGRTYVSLYNVTEEFYKSHRDYLVELARREGKPILVRILPTQKYYWVLNVEYHIVDELGRPREIATFQIDVGNAQRFGIKYVDENNQVKYPVIIHTAIIGSVERYLYAVFDTIAKAEREGKTPRLPTWLAPVQVRIIPVARDNLKFAMEVADKLEEAGIRVDVDDRDETLSKRIRDAETSWVPYVCVVGSKEEETGTLSVRIRGEGQAKMTAEELIKRVREETRGYPTRPLYLPRLLSQRPTRG</sequence>
<keyword id="KW-0030">Aminoacyl-tRNA synthetase</keyword>
<keyword id="KW-0067">ATP-binding</keyword>
<keyword id="KW-0963">Cytoplasm</keyword>
<keyword id="KW-0436">Ligase</keyword>
<keyword id="KW-0479">Metal-binding</keyword>
<keyword id="KW-0547">Nucleotide-binding</keyword>
<keyword id="KW-0648">Protein biosynthesis</keyword>
<keyword id="KW-0694">RNA-binding</keyword>
<keyword id="KW-0820">tRNA-binding</keyword>
<keyword id="KW-0862">Zinc</keyword>
<comment type="function">
    <text evidence="1">Catalyzes the attachment of threonine to tRNA(Thr) in a two-step reaction: L-threonine is first activated by ATP to form Thr-AMP and then transferred to the acceptor end of tRNA(Thr). Also edits incorrectly charged L-seryl-tRNA(Thr).</text>
</comment>
<comment type="catalytic activity">
    <reaction evidence="1">
        <text>tRNA(Thr) + L-threonine + ATP = L-threonyl-tRNA(Thr) + AMP + diphosphate + H(+)</text>
        <dbReference type="Rhea" id="RHEA:24624"/>
        <dbReference type="Rhea" id="RHEA-COMP:9670"/>
        <dbReference type="Rhea" id="RHEA-COMP:9704"/>
        <dbReference type="ChEBI" id="CHEBI:15378"/>
        <dbReference type="ChEBI" id="CHEBI:30616"/>
        <dbReference type="ChEBI" id="CHEBI:33019"/>
        <dbReference type="ChEBI" id="CHEBI:57926"/>
        <dbReference type="ChEBI" id="CHEBI:78442"/>
        <dbReference type="ChEBI" id="CHEBI:78534"/>
        <dbReference type="ChEBI" id="CHEBI:456215"/>
        <dbReference type="EC" id="6.1.1.3"/>
    </reaction>
</comment>
<comment type="cofactor">
    <cofactor evidence="1">
        <name>Zn(2+)</name>
        <dbReference type="ChEBI" id="CHEBI:29105"/>
    </cofactor>
    <text evidence="1">Binds 1 zinc ion per subunit.</text>
</comment>
<comment type="subunit">
    <text evidence="1">Homodimer.</text>
</comment>
<comment type="subcellular location">
    <subcellularLocation>
        <location evidence="1">Cytoplasm</location>
    </subcellularLocation>
</comment>
<comment type="domain">
    <text evidence="1">The N-terminal domain is an archaea-specific tRNA-editing domain that hydrolyzes incorrectly charged L-seryl-tRNA(Thr). Catalysis of tRNA editing is performed by the charged tRNA itself.</text>
</comment>
<comment type="similarity">
    <text evidence="1">Belongs to the class-II aminoacyl-tRNA synthetase family.</text>
</comment>
<feature type="chain" id="PRO_1000020482" description="Threonine--tRNA ligase">
    <location>
        <begin position="1"/>
        <end position="607"/>
    </location>
</feature>
<feature type="region of interest" description="Editing domain" evidence="1">
    <location>
        <begin position="1"/>
        <end position="143"/>
    </location>
</feature>
<feature type="region of interest" description="Catalytic" evidence="1">
    <location>
        <begin position="193"/>
        <end position="489"/>
    </location>
</feature>
<feature type="region of interest" description="Catalytic">
    <location>
        <begin position="194"/>
        <end position="489"/>
    </location>
</feature>
<feature type="binding site" evidence="1">
    <location>
        <position position="286"/>
    </location>
    <ligand>
        <name>Zn(2+)</name>
        <dbReference type="ChEBI" id="CHEBI:29105"/>
    </ligand>
</feature>
<feature type="binding site" evidence="1">
    <location>
        <position position="337"/>
    </location>
    <ligand>
        <name>Zn(2+)</name>
        <dbReference type="ChEBI" id="CHEBI:29105"/>
    </ligand>
</feature>
<feature type="binding site" evidence="1">
    <location>
        <position position="458"/>
    </location>
    <ligand>
        <name>Zn(2+)</name>
        <dbReference type="ChEBI" id="CHEBI:29105"/>
    </ligand>
</feature>